<reference key="1">
    <citation type="journal article" date="1986" name="J. Biol. Chem.">
        <title>Isolation and sequence analyses of cDNA clones for the large subunits of two isozymes of rabbit calcium-dependent protease.</title>
        <authorList>
            <person name="Emori Y."/>
            <person name="Kawasaki H."/>
            <person name="Sugihara H."/>
            <person name="Imajoh S."/>
            <person name="Kawashima S."/>
            <person name="Suzuki K."/>
        </authorList>
    </citation>
    <scope>NUCLEOTIDE SEQUENCE [MRNA]</scope>
    <scope>TISSUE SPECIFICITY</scope>
</reference>
<reference key="2">
    <citation type="journal article" date="1987" name="J. Biochem.">
        <title>Separation of peptides on the basis of the difference in positive charge: simultaneous isolation of C-terminal and blocked N-terminal peptides from tryptic digests.</title>
        <authorList>
            <person name="Kawasaki H."/>
            <person name="Imajoh S."/>
            <person name="Suzuki K."/>
        </authorList>
    </citation>
    <scope>AMINO-ACID COMPOSITION</scope>
</reference>
<reference key="3">
    <citation type="journal article" date="1987" name="J. Biochem.">
        <title>E-F hand structure-domain of calcium-activated neutral protease (CANP) can bind Ca2+ ions.</title>
        <authorList>
            <person name="Minami Y."/>
            <person name="Emori Y."/>
            <person name="Kawasaki H."/>
            <person name="Suzuki K."/>
        </authorList>
    </citation>
    <scope>CALCIUM-BINDING DATA</scope>
</reference>
<gene>
    <name evidence="1" type="primary">CAPN1</name>
</gene>
<keyword id="KW-0068">Autocatalytic cleavage</keyword>
<keyword id="KW-0106">Calcium</keyword>
<keyword id="KW-1003">Cell membrane</keyword>
<keyword id="KW-0963">Cytoplasm</keyword>
<keyword id="KW-0378">Hydrolase</keyword>
<keyword id="KW-0472">Membrane</keyword>
<keyword id="KW-0479">Metal-binding</keyword>
<keyword id="KW-0645">Protease</keyword>
<keyword id="KW-1185">Reference proteome</keyword>
<keyword id="KW-0677">Repeat</keyword>
<keyword id="KW-0788">Thiol protease</keyword>
<feature type="chain" id="PRO_0000207699" description="Calpain-1 catalytic subunit">
    <location>
        <begin position="1" status="less than"/>
        <end position="302"/>
    </location>
</feature>
<feature type="domain" description="EF-hand 1" evidence="3">
    <location>
        <begin position="173"/>
        <end position="206"/>
    </location>
</feature>
<feature type="domain" description="EF-hand 2" evidence="3">
    <location>
        <begin position="203"/>
        <end position="238"/>
    </location>
</feature>
<feature type="domain" description="EF-hand 3" evidence="3">
    <location>
        <begin position="268"/>
        <end position="302"/>
    </location>
</feature>
<feature type="region of interest" description="Domain III">
    <location>
        <begin position="1" status="less than"/>
        <end position="114"/>
    </location>
</feature>
<feature type="region of interest" description="Linker">
    <location>
        <begin position="115"/>
        <end position="130"/>
    </location>
</feature>
<feature type="region of interest" description="Domain IV">
    <location>
        <begin position="131"/>
        <end position="301"/>
    </location>
</feature>
<feature type="binding site" evidence="3 5">
    <location>
        <position position="186"/>
    </location>
    <ligand>
        <name>Ca(2+)</name>
        <dbReference type="ChEBI" id="CHEBI:29108"/>
        <label>1</label>
    </ligand>
</feature>
<feature type="binding site" evidence="3 5">
    <location>
        <position position="188"/>
    </location>
    <ligand>
        <name>Ca(2+)</name>
        <dbReference type="ChEBI" id="CHEBI:29108"/>
        <label>1</label>
    </ligand>
</feature>
<feature type="binding site" evidence="3 5">
    <location>
        <position position="190"/>
    </location>
    <ligand>
        <name>Ca(2+)</name>
        <dbReference type="ChEBI" id="CHEBI:29108"/>
        <label>1</label>
    </ligand>
</feature>
<feature type="binding site" evidence="3 5">
    <location>
        <position position="192"/>
    </location>
    <ligand>
        <name>Ca(2+)</name>
        <dbReference type="ChEBI" id="CHEBI:29108"/>
        <label>1</label>
    </ligand>
</feature>
<feature type="binding site" evidence="3 5">
    <location>
        <position position="197"/>
    </location>
    <ligand>
        <name>Ca(2+)</name>
        <dbReference type="ChEBI" id="CHEBI:29108"/>
        <label>1</label>
    </ligand>
</feature>
<feature type="binding site" evidence="3 5">
    <location>
        <position position="216"/>
    </location>
    <ligand>
        <name>Ca(2+)</name>
        <dbReference type="ChEBI" id="CHEBI:29108"/>
        <label>2</label>
    </ligand>
</feature>
<feature type="binding site" evidence="3 5">
    <location>
        <position position="218"/>
    </location>
    <ligand>
        <name>Ca(2+)</name>
        <dbReference type="ChEBI" id="CHEBI:29108"/>
        <label>2</label>
    </ligand>
</feature>
<feature type="binding site" evidence="3 5">
    <location>
        <position position="220"/>
    </location>
    <ligand>
        <name>Ca(2+)</name>
        <dbReference type="ChEBI" id="CHEBI:29108"/>
        <label>2</label>
    </ligand>
</feature>
<feature type="binding site" evidence="3 5">
    <location>
        <position position="222"/>
    </location>
    <ligand>
        <name>Ca(2+)</name>
        <dbReference type="ChEBI" id="CHEBI:29108"/>
        <label>2</label>
    </ligand>
</feature>
<feature type="binding site" evidence="3 5">
    <location>
        <position position="227"/>
    </location>
    <ligand>
        <name>Ca(2+)</name>
        <dbReference type="ChEBI" id="CHEBI:29108"/>
        <label>2</label>
    </ligand>
</feature>
<feature type="non-terminal residue">
    <location>
        <position position="1"/>
    </location>
</feature>
<proteinExistence type="evidence at protein level"/>
<name>CAN1_RABIT</name>
<organism>
    <name type="scientific">Oryctolagus cuniculus</name>
    <name type="common">Rabbit</name>
    <dbReference type="NCBI Taxonomy" id="9986"/>
    <lineage>
        <taxon>Eukaryota</taxon>
        <taxon>Metazoa</taxon>
        <taxon>Chordata</taxon>
        <taxon>Craniata</taxon>
        <taxon>Vertebrata</taxon>
        <taxon>Euteleostomi</taxon>
        <taxon>Mammalia</taxon>
        <taxon>Eutheria</taxon>
        <taxon>Euarchontoglires</taxon>
        <taxon>Glires</taxon>
        <taxon>Lagomorpha</taxon>
        <taxon>Leporidae</taxon>
        <taxon>Oryctolagus</taxon>
    </lineage>
</organism>
<comment type="function">
    <text evidence="1">Calcium-regulated non-lysosomal thiol-protease which catalyzes limited proteolysis of substrates involved in cytoskeletal remodeling and signal transduction. Proteolytically cleaves CTBP1. Cleaves and activates caspase-7 (CASP7).</text>
</comment>
<comment type="catalytic activity">
    <reaction evidence="1">
        <text>Broad endopeptidase specificity.</text>
        <dbReference type="EC" id="3.4.22.52"/>
    </reaction>
</comment>
<comment type="cofactor">
    <cofactor evidence="1 5">
        <name>Ca(2+)</name>
        <dbReference type="ChEBI" id="CHEBI:29108"/>
    </cofactor>
    <text evidence="1 5">Binds 4 Ca(2+) ions.</text>
</comment>
<comment type="activity regulation">
    <text evidence="1">Activated by micromolar concentrations of calcium and inhibited by calpastatin.</text>
</comment>
<comment type="subunit">
    <text evidence="2">Forms a heterodimer with a small (regulatory) subunit CAPNS1.</text>
</comment>
<comment type="subcellular location">
    <subcellularLocation>
        <location evidence="1">Cytoplasm</location>
    </subcellularLocation>
    <subcellularLocation>
        <location evidence="1">Cell membrane</location>
    </subcellularLocation>
    <text evidence="1">Translocates to the plasma membrane upon Ca(2+) binding.</text>
</comment>
<comment type="tissue specificity">
    <text evidence="4">Ubiquitous.</text>
</comment>
<comment type="PTM">
    <text evidence="6">The N-terminus is blocked.</text>
</comment>
<comment type="PTM">
    <text evidence="1">Undergoes calcium-induced successive autoproteolytic cleavages that generate a membrane-bound 78 kDa active form and an intracellular 75 kDa active form. Calpastatin reduces with high efficiency the transition from 78 kDa to 75 kDa calpain forms (By similarity).</text>
</comment>
<comment type="similarity">
    <text evidence="7">Belongs to the peptidase C2 family.</text>
</comment>
<dbReference type="EC" id="3.4.22.52" evidence="1"/>
<dbReference type="EMBL" id="M13363">
    <property type="protein sequence ID" value="AAA31456.1"/>
    <property type="molecule type" value="mRNA"/>
</dbReference>
<dbReference type="PIR" id="A24815">
    <property type="entry name" value="A24815"/>
</dbReference>
<dbReference type="SMR" id="P06815"/>
<dbReference type="STRING" id="9986.ENSOCUP00000002711"/>
<dbReference type="InParanoid" id="P06815"/>
<dbReference type="BRENDA" id="3.4.22.52">
    <property type="organism ID" value="1749"/>
</dbReference>
<dbReference type="Proteomes" id="UP000001811">
    <property type="component" value="Unplaced"/>
</dbReference>
<dbReference type="GO" id="GO:0005829">
    <property type="term" value="C:cytosol"/>
    <property type="evidence" value="ECO:0000250"/>
    <property type="project" value="UniProtKB"/>
</dbReference>
<dbReference type="GO" id="GO:0005886">
    <property type="term" value="C:plasma membrane"/>
    <property type="evidence" value="ECO:0000250"/>
    <property type="project" value="UniProtKB"/>
</dbReference>
<dbReference type="GO" id="GO:0005509">
    <property type="term" value="F:calcium ion binding"/>
    <property type="evidence" value="ECO:0000250"/>
    <property type="project" value="UniProtKB"/>
</dbReference>
<dbReference type="GO" id="GO:0004198">
    <property type="term" value="F:calcium-dependent cysteine-type endopeptidase activity"/>
    <property type="evidence" value="ECO:0000250"/>
    <property type="project" value="UniProtKB"/>
</dbReference>
<dbReference type="GO" id="GO:0008233">
    <property type="term" value="F:peptidase activity"/>
    <property type="evidence" value="ECO:0000250"/>
    <property type="project" value="UniProtKB"/>
</dbReference>
<dbReference type="GO" id="GO:0006508">
    <property type="term" value="P:proteolysis"/>
    <property type="evidence" value="ECO:0000250"/>
    <property type="project" value="UniProtKB"/>
</dbReference>
<dbReference type="GO" id="GO:0050790">
    <property type="term" value="P:regulation of catalytic activity"/>
    <property type="evidence" value="ECO:0000250"/>
    <property type="project" value="UniProtKB"/>
</dbReference>
<dbReference type="GO" id="GO:0097264">
    <property type="term" value="P:self proteolysis"/>
    <property type="evidence" value="ECO:0000250"/>
    <property type="project" value="UniProtKB"/>
</dbReference>
<dbReference type="CDD" id="cd00214">
    <property type="entry name" value="Calpain_III"/>
    <property type="match status" value="1"/>
</dbReference>
<dbReference type="CDD" id="cd16198">
    <property type="entry name" value="EFh_PEF_CAPN1"/>
    <property type="match status" value="1"/>
</dbReference>
<dbReference type="FunFam" id="1.10.238.10:FF:000124">
    <property type="entry name" value="Calpain-1 catalytic subunit"/>
    <property type="match status" value="1"/>
</dbReference>
<dbReference type="FunFam" id="2.60.120.380:FF:000001">
    <property type="entry name" value="Calpain-1 catalytic subunit"/>
    <property type="match status" value="1"/>
</dbReference>
<dbReference type="Gene3D" id="2.60.120.380">
    <property type="match status" value="1"/>
</dbReference>
<dbReference type="Gene3D" id="1.10.238.10">
    <property type="entry name" value="EF-hand"/>
    <property type="match status" value="1"/>
</dbReference>
<dbReference type="InterPro" id="IPR033883">
    <property type="entry name" value="C2_III"/>
</dbReference>
<dbReference type="InterPro" id="IPR022684">
    <property type="entry name" value="Calpain_cysteine_protease"/>
</dbReference>
<dbReference type="InterPro" id="IPR022682">
    <property type="entry name" value="Calpain_domain_III"/>
</dbReference>
<dbReference type="InterPro" id="IPR022683">
    <property type="entry name" value="Calpain_III"/>
</dbReference>
<dbReference type="InterPro" id="IPR036213">
    <property type="entry name" value="Calpain_III_sf"/>
</dbReference>
<dbReference type="InterPro" id="IPR011992">
    <property type="entry name" value="EF-hand-dom_pair"/>
</dbReference>
<dbReference type="InterPro" id="IPR018247">
    <property type="entry name" value="EF_Hand_1_Ca_BS"/>
</dbReference>
<dbReference type="InterPro" id="IPR002048">
    <property type="entry name" value="EF_hand_dom"/>
</dbReference>
<dbReference type="PANTHER" id="PTHR10183">
    <property type="entry name" value="CALPAIN"/>
    <property type="match status" value="1"/>
</dbReference>
<dbReference type="PANTHER" id="PTHR10183:SF284">
    <property type="entry name" value="CALPAIN-1 CATALYTIC SUBUNIT"/>
    <property type="match status" value="1"/>
</dbReference>
<dbReference type="Pfam" id="PF01067">
    <property type="entry name" value="Calpain_III"/>
    <property type="match status" value="1"/>
</dbReference>
<dbReference type="Pfam" id="PF13833">
    <property type="entry name" value="EF-hand_8"/>
    <property type="match status" value="1"/>
</dbReference>
<dbReference type="SMART" id="SM00720">
    <property type="entry name" value="calpain_III"/>
    <property type="match status" value="1"/>
</dbReference>
<dbReference type="SUPFAM" id="SSF49758">
    <property type="entry name" value="Calpain large subunit, middle domain (domain III)"/>
    <property type="match status" value="1"/>
</dbReference>
<dbReference type="SUPFAM" id="SSF47473">
    <property type="entry name" value="EF-hand"/>
    <property type="match status" value="1"/>
</dbReference>
<dbReference type="PROSITE" id="PS00018">
    <property type="entry name" value="EF_HAND_1"/>
    <property type="match status" value="2"/>
</dbReference>
<dbReference type="PROSITE" id="PS50222">
    <property type="entry name" value="EF_HAND_2"/>
    <property type="match status" value="3"/>
</dbReference>
<sequence length="302" mass="35275">RESGCSFVLALMQKHRRRERRFGRDMETIGFAVYEVPRELVGQPALHLKRDFFLANASRARSEQFINLREVSTRFRLPPGEYVVVPSTFEPNKEGDFVLRFFSEKRAGTQELDDQIQANLPDEQVLSAEEIDENFKALFRQLAGEDLEISVRELQTILNRITSKHKDLRTKGFSMESCRSMVNLMDRDGNGKLGLVEFNILWNRIRNYLAIFRKFDLDKSGSMSAYEMRMAIESAGFKLNKKLYELIITRYSEPDLAVDFDNFVCCLVRLETMFRFFKTLDTDLDGVVTFDLFKWLQLTMFA</sequence>
<accession>P06815</accession>
<evidence type="ECO:0000250" key="1">
    <source>
        <dbReference type="UniProtKB" id="P07384"/>
    </source>
</evidence>
<evidence type="ECO:0000250" key="2">
    <source>
        <dbReference type="UniProtKB" id="P97571"/>
    </source>
</evidence>
<evidence type="ECO:0000255" key="3">
    <source>
        <dbReference type="PROSITE-ProRule" id="PRU00448"/>
    </source>
</evidence>
<evidence type="ECO:0000269" key="4">
    <source>
    </source>
</evidence>
<evidence type="ECO:0000269" key="5">
    <source>
    </source>
</evidence>
<evidence type="ECO:0000269" key="6">
    <source>
    </source>
</evidence>
<evidence type="ECO:0000305" key="7"/>
<protein>
    <recommendedName>
        <fullName evidence="7">Calpain-1 catalytic subunit</fullName>
        <ecNumber evidence="1">3.4.22.52</ecNumber>
    </recommendedName>
    <alternativeName>
        <fullName evidence="1">Calcium-activated neutral proteinase 1</fullName>
        <shortName evidence="1">CANP 1</shortName>
    </alternativeName>
    <alternativeName>
        <fullName evidence="1">Calpain mu-type</fullName>
    </alternativeName>
    <alternativeName>
        <fullName evidence="1">Calpain-1 large subunit</fullName>
    </alternativeName>
    <alternativeName>
        <fullName evidence="1">Micromolar-calpain</fullName>
        <shortName evidence="1">muCANP</shortName>
    </alternativeName>
</protein>